<evidence type="ECO:0000250" key="1">
    <source>
        <dbReference type="UniProtKB" id="P03901"/>
    </source>
</evidence>
<evidence type="ECO:0000250" key="2">
    <source>
        <dbReference type="UniProtKB" id="P03902"/>
    </source>
</evidence>
<evidence type="ECO:0000255" key="3"/>
<evidence type="ECO:0000305" key="4"/>
<feature type="chain" id="PRO_0000275031" description="NADH-ubiquinone oxidoreductase chain 4L">
    <location>
        <begin position="1"/>
        <end position="98"/>
    </location>
</feature>
<feature type="transmembrane region" description="Helical" evidence="3">
    <location>
        <begin position="1"/>
        <end position="21"/>
    </location>
</feature>
<feature type="transmembrane region" description="Helical" evidence="3">
    <location>
        <begin position="29"/>
        <end position="49"/>
    </location>
</feature>
<feature type="transmembrane region" description="Helical" evidence="3">
    <location>
        <begin position="59"/>
        <end position="79"/>
    </location>
</feature>
<keyword id="KW-0249">Electron transport</keyword>
<keyword id="KW-0472">Membrane</keyword>
<keyword id="KW-0496">Mitochondrion</keyword>
<keyword id="KW-0999">Mitochondrion inner membrane</keyword>
<keyword id="KW-0520">NAD</keyword>
<keyword id="KW-0679">Respiratory chain</keyword>
<keyword id="KW-1278">Translocase</keyword>
<keyword id="KW-0812">Transmembrane</keyword>
<keyword id="KW-1133">Transmembrane helix</keyword>
<keyword id="KW-0813">Transport</keyword>
<keyword id="KW-0830">Ubiquinone</keyword>
<protein>
    <recommendedName>
        <fullName>NADH-ubiquinone oxidoreductase chain 4L</fullName>
        <ecNumber>7.1.1.2</ecNumber>
    </recommendedName>
    <alternativeName>
        <fullName>NADH dehydrogenase subunit 4L</fullName>
    </alternativeName>
</protein>
<organism>
    <name type="scientific">Inia geoffrensis</name>
    <name type="common">Amazon river dolphin</name>
    <name type="synonym">Delphinus geoffrensis</name>
    <dbReference type="NCBI Taxonomy" id="9725"/>
    <lineage>
        <taxon>Eukaryota</taxon>
        <taxon>Metazoa</taxon>
        <taxon>Chordata</taxon>
        <taxon>Craniata</taxon>
        <taxon>Vertebrata</taxon>
        <taxon>Euteleostomi</taxon>
        <taxon>Mammalia</taxon>
        <taxon>Eutheria</taxon>
        <taxon>Laurasiatheria</taxon>
        <taxon>Artiodactyla</taxon>
        <taxon>Whippomorpha</taxon>
        <taxon>Cetacea</taxon>
        <taxon>Odontoceti</taxon>
        <taxon>Iniidae</taxon>
        <taxon>Inia</taxon>
    </lineage>
</organism>
<reference key="1">
    <citation type="journal article" date="2004" name="Gene">
        <title>Mitogenomic analyses provide new insights into cetacean origin and evolution.</title>
        <authorList>
            <person name="Arnason U."/>
            <person name="Gullberg A."/>
            <person name="Janke A."/>
        </authorList>
    </citation>
    <scope>NUCLEOTIDE SEQUENCE [GENOMIC DNA]</scope>
</reference>
<proteinExistence type="inferred from homology"/>
<geneLocation type="mitochondrion"/>
<gene>
    <name type="primary">MT-ND4L</name>
    <name type="synonym">MTND4L</name>
    <name type="synonym">NADH4L</name>
    <name type="synonym">ND4L</name>
</gene>
<name>NU4LM_INIGE</name>
<dbReference type="EC" id="7.1.1.2"/>
<dbReference type="EMBL" id="AJ554059">
    <property type="protein sequence ID" value="CAD87996.1"/>
    <property type="molecule type" value="Genomic_DNA"/>
</dbReference>
<dbReference type="RefSeq" id="NP_944719.1">
    <property type="nucleotide sequence ID" value="NC_005276.1"/>
</dbReference>
<dbReference type="SMR" id="Q70RS8"/>
<dbReference type="GeneID" id="2658391"/>
<dbReference type="CTD" id="4539"/>
<dbReference type="GO" id="GO:0005743">
    <property type="term" value="C:mitochondrial inner membrane"/>
    <property type="evidence" value="ECO:0000250"/>
    <property type="project" value="UniProtKB"/>
</dbReference>
<dbReference type="GO" id="GO:0045271">
    <property type="term" value="C:respiratory chain complex I"/>
    <property type="evidence" value="ECO:0000250"/>
    <property type="project" value="UniProtKB"/>
</dbReference>
<dbReference type="GO" id="GO:0008137">
    <property type="term" value="F:NADH dehydrogenase (ubiquinone) activity"/>
    <property type="evidence" value="ECO:0000250"/>
    <property type="project" value="UniProtKB"/>
</dbReference>
<dbReference type="GO" id="GO:0042773">
    <property type="term" value="P:ATP synthesis coupled electron transport"/>
    <property type="evidence" value="ECO:0007669"/>
    <property type="project" value="InterPro"/>
</dbReference>
<dbReference type="FunFam" id="1.10.287.3510:FF:000002">
    <property type="entry name" value="NADH-ubiquinone oxidoreductase chain 4L"/>
    <property type="match status" value="1"/>
</dbReference>
<dbReference type="Gene3D" id="1.10.287.3510">
    <property type="match status" value="1"/>
</dbReference>
<dbReference type="InterPro" id="IPR001133">
    <property type="entry name" value="NADH_UbQ_OxRdtase_chain4L/K"/>
</dbReference>
<dbReference type="InterPro" id="IPR039428">
    <property type="entry name" value="NUOK/Mnh_C1-like"/>
</dbReference>
<dbReference type="PANTHER" id="PTHR11434:SF0">
    <property type="entry name" value="NADH-UBIQUINONE OXIDOREDUCTASE CHAIN 4L"/>
    <property type="match status" value="1"/>
</dbReference>
<dbReference type="PANTHER" id="PTHR11434">
    <property type="entry name" value="NADH-UBIQUINONE OXIDOREDUCTASE SUBUNIT ND4L"/>
    <property type="match status" value="1"/>
</dbReference>
<dbReference type="Pfam" id="PF00420">
    <property type="entry name" value="Oxidored_q2"/>
    <property type="match status" value="1"/>
</dbReference>
<comment type="function">
    <text evidence="1">Core subunit of the mitochondrial membrane respiratory chain NADH dehydrogenase (Complex I) which catalyzes electron transfer from NADH through the respiratory chain, using ubiquinone as an electron acceptor. Part of the enzyme membrane arm which is embedded in the lipid bilayer and involved in proton translocation.</text>
</comment>
<comment type="catalytic activity">
    <reaction evidence="1">
        <text>a ubiquinone + NADH + 5 H(+)(in) = a ubiquinol + NAD(+) + 4 H(+)(out)</text>
        <dbReference type="Rhea" id="RHEA:29091"/>
        <dbReference type="Rhea" id="RHEA-COMP:9565"/>
        <dbReference type="Rhea" id="RHEA-COMP:9566"/>
        <dbReference type="ChEBI" id="CHEBI:15378"/>
        <dbReference type="ChEBI" id="CHEBI:16389"/>
        <dbReference type="ChEBI" id="CHEBI:17976"/>
        <dbReference type="ChEBI" id="CHEBI:57540"/>
        <dbReference type="ChEBI" id="CHEBI:57945"/>
        <dbReference type="EC" id="7.1.1.2"/>
    </reaction>
    <physiologicalReaction direction="left-to-right" evidence="1">
        <dbReference type="Rhea" id="RHEA:29092"/>
    </physiologicalReaction>
</comment>
<comment type="subunit">
    <text evidence="2">Core subunit of respiratory chain NADH dehydrogenase (Complex I) which is composed of 45 different subunits.</text>
</comment>
<comment type="subcellular location">
    <subcellularLocation>
        <location evidence="2">Mitochondrion inner membrane</location>
        <topology evidence="3">Multi-pass membrane protein</topology>
    </subcellularLocation>
</comment>
<comment type="similarity">
    <text evidence="4">Belongs to the complex I subunit 4L family.</text>
</comment>
<sequence>MTLIHMNIFMAFTMSLTGFLMYRSHLMSALLCLEGMILSLFILVTLTVLNLHLTLAKMMPIILLVFAACEAAIGLALLVKISNTYGTDYVQNLNLLQC</sequence>
<accession>Q70RS8</accession>